<name>HR2_ARATH</name>
<reference key="1">
    <citation type="journal article" date="2001" name="Science">
        <title>Broad-spectrum mildew resistance in Arabidopsis thaliana mediated by RPW8.</title>
        <authorList>
            <person name="Xiao S."/>
            <person name="Ellwood S."/>
            <person name="Calis O."/>
            <person name="Patrick E."/>
            <person name="Li T."/>
            <person name="Coleman M."/>
            <person name="Turner J.G."/>
        </authorList>
    </citation>
    <scope>NUCLEOTIDE SEQUENCE [GENOMIC DNA]</scope>
    <scope>GENE FAMILY</scope>
    <scope>NOMENCLATURE</scope>
    <source>
        <strain>cv. Ms-0</strain>
    </source>
</reference>
<reference key="2">
    <citation type="submission" date="2014-03" db="EMBL/GenBank/DDBJ databases">
        <title>A species-wide analysis of genetic incompatibilities identifies NLR loci as hotspots of deleterious epistasis.</title>
        <authorList>
            <person name="Chae E."/>
            <person name="Bomblies K."/>
            <person name="Kim S.-T."/>
            <person name="Karelina D."/>
            <person name="Zaidem M."/>
            <person name="Ossowski S."/>
            <person name="Martin Pizarro C."/>
            <person name="Laitinen R.A."/>
            <person name="Rowan B.A."/>
            <person name="Tenenboim H."/>
            <person name="Lechner S."/>
            <person name="Demar M."/>
            <person name="Habring-Mueller A."/>
            <person name="Lanz C."/>
            <person name="Raetsch G."/>
            <person name="Weigel D."/>
        </authorList>
    </citation>
    <scope>NUCLEOTIDE SEQUENCE [GENOMIC DNA]</scope>
</reference>
<reference key="3">
    <citation type="journal article" date="2000" name="Nature">
        <title>Sequence and analysis of chromosome 3 of the plant Arabidopsis thaliana.</title>
        <authorList>
            <person name="Salanoubat M."/>
            <person name="Lemcke K."/>
            <person name="Rieger M."/>
            <person name="Ansorge W."/>
            <person name="Unseld M."/>
            <person name="Fartmann B."/>
            <person name="Valle G."/>
            <person name="Bloecker H."/>
            <person name="Perez-Alonso M."/>
            <person name="Obermaier B."/>
            <person name="Delseny M."/>
            <person name="Boutry M."/>
            <person name="Grivell L.A."/>
            <person name="Mache R."/>
            <person name="Puigdomenech P."/>
            <person name="De Simone V."/>
            <person name="Choisne N."/>
            <person name="Artiguenave F."/>
            <person name="Robert C."/>
            <person name="Brottier P."/>
            <person name="Wincker P."/>
            <person name="Cattolico L."/>
            <person name="Weissenbach J."/>
            <person name="Saurin W."/>
            <person name="Quetier F."/>
            <person name="Schaefer M."/>
            <person name="Mueller-Auer S."/>
            <person name="Gabel C."/>
            <person name="Fuchs M."/>
            <person name="Benes V."/>
            <person name="Wurmbach E."/>
            <person name="Drzonek H."/>
            <person name="Erfle H."/>
            <person name="Jordan N."/>
            <person name="Bangert S."/>
            <person name="Wiedelmann R."/>
            <person name="Kranz H."/>
            <person name="Voss H."/>
            <person name="Holland R."/>
            <person name="Brandt P."/>
            <person name="Nyakatura G."/>
            <person name="Vezzi A."/>
            <person name="D'Angelo M."/>
            <person name="Pallavicini A."/>
            <person name="Toppo S."/>
            <person name="Simionati B."/>
            <person name="Conrad A."/>
            <person name="Hornischer K."/>
            <person name="Kauer G."/>
            <person name="Loehnert T.-H."/>
            <person name="Nordsiek G."/>
            <person name="Reichelt J."/>
            <person name="Scharfe M."/>
            <person name="Schoen O."/>
            <person name="Bargues M."/>
            <person name="Terol J."/>
            <person name="Climent J."/>
            <person name="Navarro P."/>
            <person name="Collado C."/>
            <person name="Perez-Perez A."/>
            <person name="Ottenwaelder B."/>
            <person name="Duchemin D."/>
            <person name="Cooke R."/>
            <person name="Laudie M."/>
            <person name="Berger-Llauro C."/>
            <person name="Purnelle B."/>
            <person name="Masuy D."/>
            <person name="de Haan M."/>
            <person name="Maarse A.C."/>
            <person name="Alcaraz J.-P."/>
            <person name="Cottet A."/>
            <person name="Casacuberta E."/>
            <person name="Monfort A."/>
            <person name="Argiriou A."/>
            <person name="Flores M."/>
            <person name="Liguori R."/>
            <person name="Vitale D."/>
            <person name="Mannhaupt G."/>
            <person name="Haase D."/>
            <person name="Schoof H."/>
            <person name="Rudd S."/>
            <person name="Zaccaria P."/>
            <person name="Mewes H.-W."/>
            <person name="Mayer K.F.X."/>
            <person name="Kaul S."/>
            <person name="Town C.D."/>
            <person name="Koo H.L."/>
            <person name="Tallon L.J."/>
            <person name="Jenkins J."/>
            <person name="Rooney T."/>
            <person name="Rizzo M."/>
            <person name="Walts A."/>
            <person name="Utterback T."/>
            <person name="Fujii C.Y."/>
            <person name="Shea T.P."/>
            <person name="Creasy T.H."/>
            <person name="Haas B."/>
            <person name="Maiti R."/>
            <person name="Wu D."/>
            <person name="Peterson J."/>
            <person name="Van Aken S."/>
            <person name="Pai G."/>
            <person name="Militscher J."/>
            <person name="Sellers P."/>
            <person name="Gill J.E."/>
            <person name="Feldblyum T.V."/>
            <person name="Preuss D."/>
            <person name="Lin X."/>
            <person name="Nierman W.C."/>
            <person name="Salzberg S.L."/>
            <person name="White O."/>
            <person name="Venter J.C."/>
            <person name="Fraser C.M."/>
            <person name="Kaneko T."/>
            <person name="Nakamura Y."/>
            <person name="Sato S."/>
            <person name="Kato T."/>
            <person name="Asamizu E."/>
            <person name="Sasamoto S."/>
            <person name="Kimura T."/>
            <person name="Idesawa K."/>
            <person name="Kawashima K."/>
            <person name="Kishida Y."/>
            <person name="Kiyokawa C."/>
            <person name="Kohara M."/>
            <person name="Matsumoto M."/>
            <person name="Matsuno A."/>
            <person name="Muraki A."/>
            <person name="Nakayama S."/>
            <person name="Nakazaki N."/>
            <person name="Shinpo S."/>
            <person name="Takeuchi C."/>
            <person name="Wada T."/>
            <person name="Watanabe A."/>
            <person name="Yamada M."/>
            <person name="Yasuda M."/>
            <person name="Tabata S."/>
        </authorList>
    </citation>
    <scope>NUCLEOTIDE SEQUENCE [LARGE SCALE GENOMIC DNA]</scope>
    <source>
        <strain>cv. Columbia</strain>
    </source>
</reference>
<reference key="4">
    <citation type="journal article" date="2017" name="Plant J.">
        <title>Araport11: a complete reannotation of the Arabidopsis thaliana reference genome.</title>
        <authorList>
            <person name="Cheng C.Y."/>
            <person name="Krishnakumar V."/>
            <person name="Chan A.P."/>
            <person name="Thibaud-Nissen F."/>
            <person name="Schobel S."/>
            <person name="Town C.D."/>
        </authorList>
    </citation>
    <scope>GENOME REANNOTATION</scope>
    <source>
        <strain>cv. Columbia</strain>
    </source>
</reference>
<reference key="5">
    <citation type="journal article" date="2004" name="Mol. Biol. Evol.">
        <title>Origin and maintenance of a broad-spectrum disease resistance locus in Arabidopsis.</title>
        <authorList>
            <person name="Xiao S."/>
            <person name="Emerson B."/>
            <person name="Ratanasut K."/>
            <person name="Patrick E."/>
            <person name="O'Neill C."/>
            <person name="Bancroft I."/>
            <person name="Turner J.G."/>
        </authorList>
    </citation>
    <scope>INDUCTION BY ERYSIPHE CICHORACEARUM</scope>
    <scope>GENE FAMILY</scope>
</reference>
<dbReference type="EMBL" id="AF273059">
    <property type="protein sequence ID" value="AAK09269.1"/>
    <property type="molecule type" value="Genomic_DNA"/>
</dbReference>
<dbReference type="EMBL" id="KJ634211">
    <property type="protein sequence ID" value="AIE47873.1"/>
    <property type="molecule type" value="Genomic_DNA"/>
</dbReference>
<dbReference type="EMBL" id="AL133363">
    <property type="protein sequence ID" value="CAB62475.1"/>
    <property type="molecule type" value="Genomic_DNA"/>
</dbReference>
<dbReference type="EMBL" id="CP002686">
    <property type="protein sequence ID" value="AEE78669.1"/>
    <property type="molecule type" value="Genomic_DNA"/>
</dbReference>
<dbReference type="PIR" id="T46077">
    <property type="entry name" value="T46077"/>
</dbReference>
<dbReference type="RefSeq" id="NP_190615.1">
    <property type="nucleotide sequence ID" value="NM_114906.2"/>
</dbReference>
<dbReference type="SMR" id="Q9SCS8"/>
<dbReference type="STRING" id="3702.Q9SCS8"/>
<dbReference type="PaxDb" id="3702-AT3G50460.1"/>
<dbReference type="EnsemblPlants" id="AT3G50460.1">
    <property type="protein sequence ID" value="AT3G50460.1"/>
    <property type="gene ID" value="AT3G50460"/>
</dbReference>
<dbReference type="GeneID" id="824210"/>
<dbReference type="Gramene" id="AT3G50460.1">
    <property type="protein sequence ID" value="AT3G50460.1"/>
    <property type="gene ID" value="AT3G50460"/>
</dbReference>
<dbReference type="KEGG" id="ath:AT3G50460"/>
<dbReference type="Araport" id="AT3G50460"/>
<dbReference type="TAIR" id="AT3G50460">
    <property type="gene designation" value="HR2"/>
</dbReference>
<dbReference type="HOGENOM" id="CLU_1436271_0_0_1"/>
<dbReference type="InParanoid" id="Q9SCS8"/>
<dbReference type="OMA" id="QWADIKD"/>
<dbReference type="PhylomeDB" id="Q9SCS8"/>
<dbReference type="PRO" id="PR:Q9SCS8"/>
<dbReference type="Proteomes" id="UP000006548">
    <property type="component" value="Chromosome 3"/>
</dbReference>
<dbReference type="ExpressionAtlas" id="Q9SCS8">
    <property type="expression patterns" value="baseline and differential"/>
</dbReference>
<dbReference type="GO" id="GO:0016020">
    <property type="term" value="C:membrane"/>
    <property type="evidence" value="ECO:0007669"/>
    <property type="project" value="UniProtKB-SubCell"/>
</dbReference>
<dbReference type="GO" id="GO:0009626">
    <property type="term" value="P:plant-type hypersensitive response"/>
    <property type="evidence" value="ECO:0007669"/>
    <property type="project" value="UniProtKB-KW"/>
</dbReference>
<dbReference type="GO" id="GO:0009620">
    <property type="term" value="P:response to fungus"/>
    <property type="evidence" value="ECO:0000270"/>
    <property type="project" value="UniProtKB"/>
</dbReference>
<dbReference type="InterPro" id="IPR008808">
    <property type="entry name" value="Powdery_mildew-R_dom"/>
</dbReference>
<dbReference type="Pfam" id="PF05659">
    <property type="entry name" value="RPW8"/>
    <property type="match status" value="1"/>
</dbReference>
<dbReference type="PROSITE" id="PS51153">
    <property type="entry name" value="RPW8"/>
    <property type="match status" value="1"/>
</dbReference>
<keyword id="KW-0175">Coiled coil</keyword>
<keyword id="KW-0381">Hypersensitive response</keyword>
<keyword id="KW-0472">Membrane</keyword>
<keyword id="KW-0611">Plant defense</keyword>
<keyword id="KW-1185">Reference proteome</keyword>
<keyword id="KW-0812">Transmembrane</keyword>
<keyword id="KW-1133">Transmembrane helix</keyword>
<evidence type="ECO:0000255" key="1"/>
<evidence type="ECO:0000255" key="2">
    <source>
        <dbReference type="PROSITE-ProRule" id="PRU00495"/>
    </source>
</evidence>
<evidence type="ECO:0000269" key="3">
    <source>
    </source>
</evidence>
<evidence type="ECO:0000303" key="4">
    <source>
    </source>
</evidence>
<evidence type="ECO:0000303" key="5">
    <source>
    </source>
</evidence>
<evidence type="ECO:0000303" key="6">
    <source ref="2"/>
</evidence>
<evidence type="ECO:0000305" key="7"/>
<evidence type="ECO:0000312" key="8">
    <source>
        <dbReference type="Araport" id="AT3G50460"/>
    </source>
</evidence>
<evidence type="ECO:0000312" key="9">
    <source>
        <dbReference type="EMBL" id="CAB62475.1"/>
    </source>
</evidence>
<evidence type="ECO:0000312" key="10">
    <source>
        <dbReference type="Proteomes" id="UP000006548"/>
    </source>
</evidence>
<sequence length="205" mass="23441">MPLTEIIAGAALGLALQILHEAIQRAKDRSLTTSCILDRLDSTILRITPLMAKVEKLNKESDESLRKVFEDLKHLLEKAVVLVEAYAELKRRNLLGKYRYKRRIKELEGSLKWMVDVDVKVNQWADIKDLMAKMSEMNTKLEKIMGQPIDCIISEDNTNMDIVERVDPSLEAKAGCSNSDSKPKIDIHLRWSKQSKDHGIRFVLN</sequence>
<comment type="function">
    <text evidence="7">Probable disease resistance (R) protein.</text>
</comment>
<comment type="subcellular location">
    <subcellularLocation>
        <location evidence="1">Membrane</location>
        <topology evidence="1">Single-pass membrane protein</topology>
    </subcellularLocation>
</comment>
<comment type="induction">
    <text evidence="3">Expressed in leaves after powdery mildew infection (e.g. Erysiphe cichoracearum UCSC1).</text>
</comment>
<comment type="similarity">
    <text evidence="7">Belongs to the plant RPW8 protein family.</text>
</comment>
<organism evidence="10">
    <name type="scientific">Arabidopsis thaliana</name>
    <name type="common">Mouse-ear cress</name>
    <dbReference type="NCBI Taxonomy" id="3702"/>
    <lineage>
        <taxon>Eukaryota</taxon>
        <taxon>Viridiplantae</taxon>
        <taxon>Streptophyta</taxon>
        <taxon>Embryophyta</taxon>
        <taxon>Tracheophyta</taxon>
        <taxon>Spermatophyta</taxon>
        <taxon>Magnoliopsida</taxon>
        <taxon>eudicotyledons</taxon>
        <taxon>Gunneridae</taxon>
        <taxon>Pentapetalae</taxon>
        <taxon>rosids</taxon>
        <taxon>malvids</taxon>
        <taxon>Brassicales</taxon>
        <taxon>Brassicaceae</taxon>
        <taxon>Camelineae</taxon>
        <taxon>Arabidopsis</taxon>
    </lineage>
</organism>
<feature type="chain" id="PRO_0000431672" description="RPW8-like protein 2">
    <location>
        <begin position="1"/>
        <end position="205"/>
    </location>
</feature>
<feature type="transmembrane region" description="Helical" evidence="1">
    <location>
        <begin position="7"/>
        <end position="23"/>
    </location>
</feature>
<feature type="domain" description="RPW8" evidence="2">
    <location>
        <begin position="1"/>
        <end position="153"/>
    </location>
</feature>
<feature type="coiled-coil region" evidence="1">
    <location>
        <begin position="70"/>
        <end position="92"/>
    </location>
</feature>
<feature type="coiled-coil region" evidence="1">
    <location>
        <begin position="125"/>
        <end position="147"/>
    </location>
</feature>
<feature type="sequence conflict" description="In Ref. 1; AAK09269." evidence="7" ref="1">
    <original>G</original>
    <variation>E</variation>
    <location>
        <position position="96"/>
    </location>
</feature>
<feature type="sequence conflict" description="In Ref. 2; AIE47873." evidence="7" ref="2">
    <original>N</original>
    <variation>K</variation>
    <location>
        <position position="159"/>
    </location>
</feature>
<protein>
    <recommendedName>
        <fullName evidence="4">RPW8-like protein 2</fullName>
        <shortName evidence="5">AtHR2</shortName>
    </recommendedName>
</protein>
<proteinExistence type="evidence at transcript level"/>
<gene>
    <name evidence="4" type="primary">HR2</name>
    <name evidence="6" type="synonym">HR2KZ10</name>
    <name evidence="8" type="ordered locus">At3g50460</name>
    <name evidence="9" type="ORF">T20E23.60</name>
</gene>
<accession>Q9SCS8</accession>
<accession>A0A068LL46</accession>
<accession>Q9C5Z5</accession>